<name>Y639_DICNV</name>
<dbReference type="EMBL" id="CP000513">
    <property type="protein sequence ID" value="ABQ14330.1"/>
    <property type="molecule type" value="Genomic_DNA"/>
</dbReference>
<dbReference type="SMR" id="A5EVA6"/>
<dbReference type="STRING" id="246195.DNO_0639"/>
<dbReference type="KEGG" id="dno:DNO_0639"/>
<dbReference type="eggNOG" id="COG0792">
    <property type="taxonomic scope" value="Bacteria"/>
</dbReference>
<dbReference type="HOGENOM" id="CLU_115353_3_1_6"/>
<dbReference type="OrthoDB" id="9794876at2"/>
<dbReference type="Proteomes" id="UP000000248">
    <property type="component" value="Chromosome"/>
</dbReference>
<dbReference type="GO" id="GO:0003676">
    <property type="term" value="F:nucleic acid binding"/>
    <property type="evidence" value="ECO:0007669"/>
    <property type="project" value="InterPro"/>
</dbReference>
<dbReference type="CDD" id="cd20736">
    <property type="entry name" value="PoNe_Nuclease"/>
    <property type="match status" value="1"/>
</dbReference>
<dbReference type="Gene3D" id="3.40.1350.10">
    <property type="match status" value="1"/>
</dbReference>
<dbReference type="HAMAP" id="MF_00048">
    <property type="entry name" value="UPF0102"/>
    <property type="match status" value="1"/>
</dbReference>
<dbReference type="InterPro" id="IPR011335">
    <property type="entry name" value="Restrct_endonuc-II-like"/>
</dbReference>
<dbReference type="InterPro" id="IPR011856">
    <property type="entry name" value="tRNA_endonuc-like_dom_sf"/>
</dbReference>
<dbReference type="InterPro" id="IPR003509">
    <property type="entry name" value="UPF0102_YraN-like"/>
</dbReference>
<dbReference type="NCBIfam" id="NF009150">
    <property type="entry name" value="PRK12497.1-3"/>
    <property type="match status" value="1"/>
</dbReference>
<dbReference type="NCBIfam" id="TIGR00252">
    <property type="entry name" value="YraN family protein"/>
    <property type="match status" value="1"/>
</dbReference>
<dbReference type="PANTHER" id="PTHR34039">
    <property type="entry name" value="UPF0102 PROTEIN YRAN"/>
    <property type="match status" value="1"/>
</dbReference>
<dbReference type="PANTHER" id="PTHR34039:SF1">
    <property type="entry name" value="UPF0102 PROTEIN YRAN"/>
    <property type="match status" value="1"/>
</dbReference>
<dbReference type="Pfam" id="PF02021">
    <property type="entry name" value="UPF0102"/>
    <property type="match status" value="1"/>
</dbReference>
<dbReference type="SUPFAM" id="SSF52980">
    <property type="entry name" value="Restriction endonuclease-like"/>
    <property type="match status" value="1"/>
</dbReference>
<protein>
    <recommendedName>
        <fullName evidence="1">UPF0102 protein DNO_0639</fullName>
    </recommendedName>
</protein>
<sequence>MKFPMNNKKMTTKKRGQYGELLAADYLTAHGLNIVAKNVYSRYGEIDLIAQDDRVLVFVEVRLRRAQALVSAAESITPEKLRRCYQSAQDYLQKNYAVPPDCRFDAVLITQYQTHHEIEWLKNVIF</sequence>
<organism>
    <name type="scientific">Dichelobacter nodosus (strain VCS1703A)</name>
    <dbReference type="NCBI Taxonomy" id="246195"/>
    <lineage>
        <taxon>Bacteria</taxon>
        <taxon>Pseudomonadati</taxon>
        <taxon>Pseudomonadota</taxon>
        <taxon>Gammaproteobacteria</taxon>
        <taxon>Cardiobacteriales</taxon>
        <taxon>Cardiobacteriaceae</taxon>
        <taxon>Dichelobacter</taxon>
    </lineage>
</organism>
<gene>
    <name type="ordered locus">DNO_0639</name>
</gene>
<keyword id="KW-1185">Reference proteome</keyword>
<evidence type="ECO:0000255" key="1">
    <source>
        <dbReference type="HAMAP-Rule" id="MF_00048"/>
    </source>
</evidence>
<reference key="1">
    <citation type="journal article" date="2007" name="Nat. Biotechnol.">
        <title>Genome sequence and identification of candidate vaccine antigens from the animal pathogen Dichelobacter nodosus.</title>
        <authorList>
            <person name="Myers G.S.A."/>
            <person name="Parker D."/>
            <person name="Al-Hasani K."/>
            <person name="Kennan R.M."/>
            <person name="Seemann T."/>
            <person name="Ren Q."/>
            <person name="Badger J.H."/>
            <person name="Selengut J.D."/>
            <person name="Deboy R.T."/>
            <person name="Tettelin H."/>
            <person name="Boyce J.D."/>
            <person name="McCarl V.P."/>
            <person name="Han X."/>
            <person name="Nelson W.C."/>
            <person name="Madupu R."/>
            <person name="Mohamoud Y."/>
            <person name="Holley T."/>
            <person name="Fedorova N."/>
            <person name="Khouri H."/>
            <person name="Bottomley S.P."/>
            <person name="Whittington R.J."/>
            <person name="Adler B."/>
            <person name="Songer J.G."/>
            <person name="Rood J.I."/>
            <person name="Paulsen I.T."/>
        </authorList>
    </citation>
    <scope>NUCLEOTIDE SEQUENCE [LARGE SCALE GENOMIC DNA]</scope>
    <source>
        <strain>VCS1703A</strain>
    </source>
</reference>
<accession>A5EVA6</accession>
<feature type="chain" id="PRO_0000336169" description="UPF0102 protein DNO_0639">
    <location>
        <begin position="1"/>
        <end position="126"/>
    </location>
</feature>
<comment type="similarity">
    <text evidence="1">Belongs to the UPF0102 family.</text>
</comment>
<proteinExistence type="inferred from homology"/>